<feature type="chain" id="PRO_1000071862" description="Large ribosomal subunit protein bL36">
    <location>
        <begin position="1"/>
        <end position="38"/>
    </location>
</feature>
<reference key="1">
    <citation type="submission" date="2007-07" db="EMBL/GenBank/DDBJ databases">
        <title>Complete sequence of Fervidobacterium nodosum Rt17-B1.</title>
        <authorList>
            <consortium name="US DOE Joint Genome Institute"/>
            <person name="Copeland A."/>
            <person name="Lucas S."/>
            <person name="Lapidus A."/>
            <person name="Barry K."/>
            <person name="Glavina del Rio T."/>
            <person name="Dalin E."/>
            <person name="Tice H."/>
            <person name="Pitluck S."/>
            <person name="Saunders E."/>
            <person name="Brettin T."/>
            <person name="Bruce D."/>
            <person name="Detter J.C."/>
            <person name="Han C."/>
            <person name="Schmutz J."/>
            <person name="Larimer F."/>
            <person name="Land M."/>
            <person name="Hauser L."/>
            <person name="Kyrpides N."/>
            <person name="Mikhailova N."/>
            <person name="Nelson K."/>
            <person name="Gogarten J.P."/>
            <person name="Noll K."/>
            <person name="Richardson P."/>
        </authorList>
    </citation>
    <scope>NUCLEOTIDE SEQUENCE [LARGE SCALE GENOMIC DNA]</scope>
    <source>
        <strain>ATCC 35602 / DSM 5306 / Rt17-B1</strain>
    </source>
</reference>
<evidence type="ECO:0000255" key="1">
    <source>
        <dbReference type="HAMAP-Rule" id="MF_00251"/>
    </source>
</evidence>
<evidence type="ECO:0000305" key="2"/>
<gene>
    <name evidence="1" type="primary">rpmJ</name>
    <name type="ordered locus">Fnod_1114</name>
</gene>
<accession>A7HM28</accession>
<dbReference type="EMBL" id="CP000771">
    <property type="protein sequence ID" value="ABS60961.1"/>
    <property type="molecule type" value="Genomic_DNA"/>
</dbReference>
<dbReference type="RefSeq" id="WP_011994274.1">
    <property type="nucleotide sequence ID" value="NC_009718.1"/>
</dbReference>
<dbReference type="SMR" id="A7HM28"/>
<dbReference type="STRING" id="381764.Fnod_1114"/>
<dbReference type="KEGG" id="fno:Fnod_1114"/>
<dbReference type="eggNOG" id="COG0257">
    <property type="taxonomic scope" value="Bacteria"/>
</dbReference>
<dbReference type="HOGENOM" id="CLU_135723_6_2_0"/>
<dbReference type="OrthoDB" id="9802520at2"/>
<dbReference type="Proteomes" id="UP000002415">
    <property type="component" value="Chromosome"/>
</dbReference>
<dbReference type="GO" id="GO:0005737">
    <property type="term" value="C:cytoplasm"/>
    <property type="evidence" value="ECO:0007669"/>
    <property type="project" value="UniProtKB-ARBA"/>
</dbReference>
<dbReference type="GO" id="GO:1990904">
    <property type="term" value="C:ribonucleoprotein complex"/>
    <property type="evidence" value="ECO:0007669"/>
    <property type="project" value="UniProtKB-KW"/>
</dbReference>
<dbReference type="GO" id="GO:0005840">
    <property type="term" value="C:ribosome"/>
    <property type="evidence" value="ECO:0007669"/>
    <property type="project" value="UniProtKB-KW"/>
</dbReference>
<dbReference type="GO" id="GO:0003735">
    <property type="term" value="F:structural constituent of ribosome"/>
    <property type="evidence" value="ECO:0007669"/>
    <property type="project" value="InterPro"/>
</dbReference>
<dbReference type="GO" id="GO:0006412">
    <property type="term" value="P:translation"/>
    <property type="evidence" value="ECO:0007669"/>
    <property type="project" value="UniProtKB-UniRule"/>
</dbReference>
<dbReference type="HAMAP" id="MF_00251">
    <property type="entry name" value="Ribosomal_bL36"/>
    <property type="match status" value="1"/>
</dbReference>
<dbReference type="InterPro" id="IPR000473">
    <property type="entry name" value="Ribosomal_bL36"/>
</dbReference>
<dbReference type="InterPro" id="IPR035977">
    <property type="entry name" value="Ribosomal_bL36_sp"/>
</dbReference>
<dbReference type="NCBIfam" id="TIGR01022">
    <property type="entry name" value="rpmJ_bact"/>
    <property type="match status" value="1"/>
</dbReference>
<dbReference type="PANTHER" id="PTHR42888">
    <property type="entry name" value="50S RIBOSOMAL PROTEIN L36, CHLOROPLASTIC"/>
    <property type="match status" value="1"/>
</dbReference>
<dbReference type="PANTHER" id="PTHR42888:SF1">
    <property type="entry name" value="LARGE RIBOSOMAL SUBUNIT PROTEIN BL36C"/>
    <property type="match status" value="1"/>
</dbReference>
<dbReference type="Pfam" id="PF00444">
    <property type="entry name" value="Ribosomal_L36"/>
    <property type="match status" value="1"/>
</dbReference>
<dbReference type="SUPFAM" id="SSF57840">
    <property type="entry name" value="Ribosomal protein L36"/>
    <property type="match status" value="1"/>
</dbReference>
<dbReference type="PROSITE" id="PS00828">
    <property type="entry name" value="RIBOSOMAL_L36"/>
    <property type="match status" value="1"/>
</dbReference>
<sequence length="38" mass="4447">MKVKASVGKRCEYCKVIRRRGKVYVVCKVNPKHNQRQG</sequence>
<name>RL36_FERNB</name>
<proteinExistence type="inferred from homology"/>
<protein>
    <recommendedName>
        <fullName evidence="1">Large ribosomal subunit protein bL36</fullName>
    </recommendedName>
    <alternativeName>
        <fullName evidence="2">50S ribosomal protein L36</fullName>
    </alternativeName>
</protein>
<comment type="similarity">
    <text evidence="1">Belongs to the bacterial ribosomal protein bL36 family.</text>
</comment>
<organism>
    <name type="scientific">Fervidobacterium nodosum (strain ATCC 35602 / DSM 5306 / Rt17-B1)</name>
    <dbReference type="NCBI Taxonomy" id="381764"/>
    <lineage>
        <taxon>Bacteria</taxon>
        <taxon>Thermotogati</taxon>
        <taxon>Thermotogota</taxon>
        <taxon>Thermotogae</taxon>
        <taxon>Thermotogales</taxon>
        <taxon>Fervidobacteriaceae</taxon>
        <taxon>Fervidobacterium</taxon>
    </lineage>
</organism>
<keyword id="KW-1185">Reference proteome</keyword>
<keyword id="KW-0687">Ribonucleoprotein</keyword>
<keyword id="KW-0689">Ribosomal protein</keyword>